<name>ISPD_BORPD</name>
<comment type="function">
    <text evidence="1">Catalyzes the formation of 4-diphosphocytidyl-2-C-methyl-D-erythritol from CTP and 2-C-methyl-D-erythritol 4-phosphate (MEP).</text>
</comment>
<comment type="catalytic activity">
    <reaction evidence="1">
        <text>2-C-methyl-D-erythritol 4-phosphate + CTP + H(+) = 4-CDP-2-C-methyl-D-erythritol + diphosphate</text>
        <dbReference type="Rhea" id="RHEA:13429"/>
        <dbReference type="ChEBI" id="CHEBI:15378"/>
        <dbReference type="ChEBI" id="CHEBI:33019"/>
        <dbReference type="ChEBI" id="CHEBI:37563"/>
        <dbReference type="ChEBI" id="CHEBI:57823"/>
        <dbReference type="ChEBI" id="CHEBI:58262"/>
        <dbReference type="EC" id="2.7.7.60"/>
    </reaction>
</comment>
<comment type="pathway">
    <text evidence="1">Isoprenoid biosynthesis; isopentenyl diphosphate biosynthesis via DXP pathway; isopentenyl diphosphate from 1-deoxy-D-xylulose 5-phosphate: step 2/6.</text>
</comment>
<comment type="similarity">
    <text evidence="1">Belongs to the IspD/TarI cytidylyltransferase family. IspD subfamily.</text>
</comment>
<feature type="chain" id="PRO_1000094311" description="2-C-methyl-D-erythritol 4-phosphate cytidylyltransferase">
    <location>
        <begin position="1"/>
        <end position="224"/>
    </location>
</feature>
<feature type="site" description="Transition state stabilizer" evidence="1">
    <location>
        <position position="17"/>
    </location>
</feature>
<feature type="site" description="Transition state stabilizer" evidence="1">
    <location>
        <position position="25"/>
    </location>
</feature>
<feature type="site" description="Positions MEP for the nucleophilic attack" evidence="1">
    <location>
        <position position="154"/>
    </location>
</feature>
<feature type="site" description="Positions MEP for the nucleophilic attack" evidence="1">
    <location>
        <position position="210"/>
    </location>
</feature>
<dbReference type="EC" id="2.7.7.60" evidence="1"/>
<dbReference type="EMBL" id="AM902716">
    <property type="protein sequence ID" value="CAP42034.1"/>
    <property type="molecule type" value="Genomic_DNA"/>
</dbReference>
<dbReference type="SMR" id="A9II44"/>
<dbReference type="STRING" id="94624.Bpet1695"/>
<dbReference type="KEGG" id="bpt:Bpet1695"/>
<dbReference type="eggNOG" id="COG1211">
    <property type="taxonomic scope" value="Bacteria"/>
</dbReference>
<dbReference type="UniPathway" id="UPA00056">
    <property type="reaction ID" value="UER00093"/>
</dbReference>
<dbReference type="Proteomes" id="UP000001225">
    <property type="component" value="Chromosome"/>
</dbReference>
<dbReference type="GO" id="GO:0050518">
    <property type="term" value="F:2-C-methyl-D-erythritol 4-phosphate cytidylyltransferase activity"/>
    <property type="evidence" value="ECO:0007669"/>
    <property type="project" value="UniProtKB-UniRule"/>
</dbReference>
<dbReference type="GO" id="GO:0019288">
    <property type="term" value="P:isopentenyl diphosphate biosynthetic process, methylerythritol 4-phosphate pathway"/>
    <property type="evidence" value="ECO:0007669"/>
    <property type="project" value="UniProtKB-UniRule"/>
</dbReference>
<dbReference type="CDD" id="cd02516">
    <property type="entry name" value="CDP-ME_synthetase"/>
    <property type="match status" value="1"/>
</dbReference>
<dbReference type="FunFam" id="3.90.550.10:FF:000003">
    <property type="entry name" value="2-C-methyl-D-erythritol 4-phosphate cytidylyltransferase"/>
    <property type="match status" value="1"/>
</dbReference>
<dbReference type="Gene3D" id="3.90.550.10">
    <property type="entry name" value="Spore Coat Polysaccharide Biosynthesis Protein SpsA, Chain A"/>
    <property type="match status" value="1"/>
</dbReference>
<dbReference type="HAMAP" id="MF_00108">
    <property type="entry name" value="IspD"/>
    <property type="match status" value="1"/>
</dbReference>
<dbReference type="InterPro" id="IPR001228">
    <property type="entry name" value="IspD"/>
</dbReference>
<dbReference type="InterPro" id="IPR034683">
    <property type="entry name" value="IspD/TarI"/>
</dbReference>
<dbReference type="InterPro" id="IPR050088">
    <property type="entry name" value="IspD/TarI_cytidylyltransf_bact"/>
</dbReference>
<dbReference type="InterPro" id="IPR018294">
    <property type="entry name" value="ISPD_synthase_CS"/>
</dbReference>
<dbReference type="InterPro" id="IPR029044">
    <property type="entry name" value="Nucleotide-diphossugar_trans"/>
</dbReference>
<dbReference type="NCBIfam" id="TIGR00453">
    <property type="entry name" value="ispD"/>
    <property type="match status" value="1"/>
</dbReference>
<dbReference type="PANTHER" id="PTHR32125">
    <property type="entry name" value="2-C-METHYL-D-ERYTHRITOL 4-PHOSPHATE CYTIDYLYLTRANSFERASE, CHLOROPLASTIC"/>
    <property type="match status" value="1"/>
</dbReference>
<dbReference type="PANTHER" id="PTHR32125:SF4">
    <property type="entry name" value="2-C-METHYL-D-ERYTHRITOL 4-PHOSPHATE CYTIDYLYLTRANSFERASE, CHLOROPLASTIC"/>
    <property type="match status" value="1"/>
</dbReference>
<dbReference type="Pfam" id="PF01128">
    <property type="entry name" value="IspD"/>
    <property type="match status" value="1"/>
</dbReference>
<dbReference type="SUPFAM" id="SSF53448">
    <property type="entry name" value="Nucleotide-diphospho-sugar transferases"/>
    <property type="match status" value="1"/>
</dbReference>
<dbReference type="PROSITE" id="PS01295">
    <property type="entry name" value="ISPD"/>
    <property type="match status" value="1"/>
</dbReference>
<reference key="1">
    <citation type="journal article" date="2008" name="BMC Genomics">
        <title>The missing link: Bordetella petrii is endowed with both the metabolic versatility of environmental bacteria and virulence traits of pathogenic Bordetellae.</title>
        <authorList>
            <person name="Gross R."/>
            <person name="Guzman C.A."/>
            <person name="Sebaihia M."/>
            <person name="Martin dos Santos V.A.P."/>
            <person name="Pieper D.H."/>
            <person name="Koebnik R."/>
            <person name="Lechner M."/>
            <person name="Bartels D."/>
            <person name="Buhrmester J."/>
            <person name="Choudhuri J.V."/>
            <person name="Ebensen T."/>
            <person name="Gaigalat L."/>
            <person name="Herrmann S."/>
            <person name="Khachane A.N."/>
            <person name="Larisch C."/>
            <person name="Link S."/>
            <person name="Linke B."/>
            <person name="Meyer F."/>
            <person name="Mormann S."/>
            <person name="Nakunst D."/>
            <person name="Rueckert C."/>
            <person name="Schneiker-Bekel S."/>
            <person name="Schulze K."/>
            <person name="Voerholter F.-J."/>
            <person name="Yevsa T."/>
            <person name="Engle J.T."/>
            <person name="Goldman W.E."/>
            <person name="Puehler A."/>
            <person name="Goebel U.B."/>
            <person name="Goesmann A."/>
            <person name="Bloecker H."/>
            <person name="Kaiser O."/>
            <person name="Martinez-Arias R."/>
        </authorList>
    </citation>
    <scope>NUCLEOTIDE SEQUENCE [LARGE SCALE GENOMIC DNA]</scope>
    <source>
        <strain>ATCC BAA-461 / DSM 12804 / CCUG 43448</strain>
    </source>
</reference>
<protein>
    <recommendedName>
        <fullName evidence="1">2-C-methyl-D-erythritol 4-phosphate cytidylyltransferase</fullName>
        <ecNumber evidence="1">2.7.7.60</ecNumber>
    </recommendedName>
    <alternativeName>
        <fullName evidence="1">4-diphosphocytidyl-2C-methyl-D-erythritol synthase</fullName>
    </alternativeName>
    <alternativeName>
        <fullName evidence="1">MEP cytidylyltransferase</fullName>
        <shortName evidence="1">MCT</shortName>
    </alternativeName>
</protein>
<proteinExistence type="inferred from homology"/>
<keyword id="KW-0414">Isoprene biosynthesis</keyword>
<keyword id="KW-0548">Nucleotidyltransferase</keyword>
<keyword id="KW-0808">Transferase</keyword>
<organism>
    <name type="scientific">Bordetella petrii (strain ATCC BAA-461 / DSM 12804 / CCUG 43448)</name>
    <dbReference type="NCBI Taxonomy" id="340100"/>
    <lineage>
        <taxon>Bacteria</taxon>
        <taxon>Pseudomonadati</taxon>
        <taxon>Pseudomonadota</taxon>
        <taxon>Betaproteobacteria</taxon>
        <taxon>Burkholderiales</taxon>
        <taxon>Alcaligenaceae</taxon>
        <taxon>Bordetella</taxon>
    </lineage>
</organism>
<sequence>MTDSLIAIVPAAGVGQRAGRPDLPKQYRLLAGQPMLRWAVAALLADARIGQVRVAVSPGDERAGAALAGLPRTVCRPCGGPTRAATVAAALADSNAADSDWILVHDAARPGLPPDALARLIDACLADAVGGLLALPVADTVKAGGPRVRATLDRDGLWLAQTPQMFRAGVLRAALAAAQAGGGTVTDEASAIEAAGHAPLLVPGAMRNFKVTWPDDFELMEKWL</sequence>
<accession>A9II44</accession>
<evidence type="ECO:0000255" key="1">
    <source>
        <dbReference type="HAMAP-Rule" id="MF_00108"/>
    </source>
</evidence>
<gene>
    <name evidence="1" type="primary">ispD</name>
    <name type="ordered locus">Bpet1695</name>
</gene>